<name>DEF_RHOPT</name>
<organism>
    <name type="scientific">Rhodopseudomonas palustris (strain TIE-1)</name>
    <dbReference type="NCBI Taxonomy" id="395960"/>
    <lineage>
        <taxon>Bacteria</taxon>
        <taxon>Pseudomonadati</taxon>
        <taxon>Pseudomonadota</taxon>
        <taxon>Alphaproteobacteria</taxon>
        <taxon>Hyphomicrobiales</taxon>
        <taxon>Nitrobacteraceae</taxon>
        <taxon>Rhodopseudomonas</taxon>
    </lineage>
</organism>
<dbReference type="EC" id="3.5.1.88" evidence="1"/>
<dbReference type="EMBL" id="CP001096">
    <property type="protein sequence ID" value="ACE99184.1"/>
    <property type="molecule type" value="Genomic_DNA"/>
</dbReference>
<dbReference type="RefSeq" id="WP_011156189.1">
    <property type="nucleotide sequence ID" value="NC_011004.1"/>
</dbReference>
<dbReference type="SMR" id="B3QCH1"/>
<dbReference type="GeneID" id="66891642"/>
<dbReference type="KEGG" id="rpt:Rpal_0625"/>
<dbReference type="HOGENOM" id="CLU_061901_2_0_5"/>
<dbReference type="OrthoDB" id="9804313at2"/>
<dbReference type="Proteomes" id="UP000001725">
    <property type="component" value="Chromosome"/>
</dbReference>
<dbReference type="GO" id="GO:0046872">
    <property type="term" value="F:metal ion binding"/>
    <property type="evidence" value="ECO:0007669"/>
    <property type="project" value="UniProtKB-KW"/>
</dbReference>
<dbReference type="GO" id="GO:0042586">
    <property type="term" value="F:peptide deformylase activity"/>
    <property type="evidence" value="ECO:0007669"/>
    <property type="project" value="UniProtKB-UniRule"/>
</dbReference>
<dbReference type="GO" id="GO:0043686">
    <property type="term" value="P:co-translational protein modification"/>
    <property type="evidence" value="ECO:0007669"/>
    <property type="project" value="TreeGrafter"/>
</dbReference>
<dbReference type="GO" id="GO:0006412">
    <property type="term" value="P:translation"/>
    <property type="evidence" value="ECO:0007669"/>
    <property type="project" value="UniProtKB-UniRule"/>
</dbReference>
<dbReference type="CDD" id="cd00487">
    <property type="entry name" value="Pep_deformylase"/>
    <property type="match status" value="1"/>
</dbReference>
<dbReference type="Gene3D" id="3.90.45.10">
    <property type="entry name" value="Peptide deformylase"/>
    <property type="match status" value="1"/>
</dbReference>
<dbReference type="HAMAP" id="MF_00163">
    <property type="entry name" value="Pep_deformylase"/>
    <property type="match status" value="1"/>
</dbReference>
<dbReference type="InterPro" id="IPR023635">
    <property type="entry name" value="Peptide_deformylase"/>
</dbReference>
<dbReference type="InterPro" id="IPR036821">
    <property type="entry name" value="Peptide_deformylase_sf"/>
</dbReference>
<dbReference type="NCBIfam" id="TIGR00079">
    <property type="entry name" value="pept_deformyl"/>
    <property type="match status" value="1"/>
</dbReference>
<dbReference type="NCBIfam" id="NF001159">
    <property type="entry name" value="PRK00150.1-3"/>
    <property type="match status" value="1"/>
</dbReference>
<dbReference type="PANTHER" id="PTHR10458">
    <property type="entry name" value="PEPTIDE DEFORMYLASE"/>
    <property type="match status" value="1"/>
</dbReference>
<dbReference type="PANTHER" id="PTHR10458:SF22">
    <property type="entry name" value="PEPTIDE DEFORMYLASE"/>
    <property type="match status" value="1"/>
</dbReference>
<dbReference type="Pfam" id="PF01327">
    <property type="entry name" value="Pep_deformylase"/>
    <property type="match status" value="1"/>
</dbReference>
<dbReference type="PIRSF" id="PIRSF004749">
    <property type="entry name" value="Pep_def"/>
    <property type="match status" value="1"/>
</dbReference>
<dbReference type="PRINTS" id="PR01576">
    <property type="entry name" value="PDEFORMYLASE"/>
</dbReference>
<dbReference type="SUPFAM" id="SSF56420">
    <property type="entry name" value="Peptide deformylase"/>
    <property type="match status" value="1"/>
</dbReference>
<accession>B3QCH1</accession>
<proteinExistence type="inferred from homology"/>
<comment type="function">
    <text evidence="1">Removes the formyl group from the N-terminal Met of newly synthesized proteins. Requires at least a dipeptide for an efficient rate of reaction. N-terminal L-methionine is a prerequisite for activity but the enzyme has broad specificity at other positions.</text>
</comment>
<comment type="catalytic activity">
    <reaction evidence="1">
        <text>N-terminal N-formyl-L-methionyl-[peptide] + H2O = N-terminal L-methionyl-[peptide] + formate</text>
        <dbReference type="Rhea" id="RHEA:24420"/>
        <dbReference type="Rhea" id="RHEA-COMP:10639"/>
        <dbReference type="Rhea" id="RHEA-COMP:10640"/>
        <dbReference type="ChEBI" id="CHEBI:15377"/>
        <dbReference type="ChEBI" id="CHEBI:15740"/>
        <dbReference type="ChEBI" id="CHEBI:49298"/>
        <dbReference type="ChEBI" id="CHEBI:64731"/>
        <dbReference type="EC" id="3.5.1.88"/>
    </reaction>
</comment>
<comment type="cofactor">
    <cofactor evidence="1">
        <name>Fe(2+)</name>
        <dbReference type="ChEBI" id="CHEBI:29033"/>
    </cofactor>
    <text evidence="1">Binds 1 Fe(2+) ion.</text>
</comment>
<comment type="similarity">
    <text evidence="1">Belongs to the polypeptide deformylase family.</text>
</comment>
<feature type="chain" id="PRO_1000097335" description="Peptide deformylase">
    <location>
        <begin position="1"/>
        <end position="175"/>
    </location>
</feature>
<feature type="active site" evidence="1">
    <location>
        <position position="139"/>
    </location>
</feature>
<feature type="binding site" evidence="1">
    <location>
        <position position="96"/>
    </location>
    <ligand>
        <name>Fe cation</name>
        <dbReference type="ChEBI" id="CHEBI:24875"/>
    </ligand>
</feature>
<feature type="binding site" evidence="1">
    <location>
        <position position="138"/>
    </location>
    <ligand>
        <name>Fe cation</name>
        <dbReference type="ChEBI" id="CHEBI:24875"/>
    </ligand>
</feature>
<feature type="binding site" evidence="1">
    <location>
        <position position="142"/>
    </location>
    <ligand>
        <name>Fe cation</name>
        <dbReference type="ChEBI" id="CHEBI:24875"/>
    </ligand>
</feature>
<gene>
    <name evidence="1" type="primary">def</name>
    <name type="ordered locus">Rpal_0625</name>
</gene>
<protein>
    <recommendedName>
        <fullName evidence="1">Peptide deformylase</fullName>
        <shortName evidence="1">PDF</shortName>
        <ecNumber evidence="1">3.5.1.88</ecNumber>
    </recommendedName>
    <alternativeName>
        <fullName evidence="1">Polypeptide deformylase</fullName>
    </alternativeName>
</protein>
<sequence length="175" mass="19838">MALREIIILPDKRLREISKPVTEVTTEIRKLADDMFESMYEAPGIGLAAIQIAEPVRLITMDIVRKEGDGKSDPRAFINPEIVGASSEMNVYEEGCLSIPEYYAEVERPKTVRIRYTDLDGNVKEEDADGLFATCIQHEIDHLNGVLFVDHLSKLKRAMVIRKFEKAAKRGIKYV</sequence>
<reference key="1">
    <citation type="submission" date="2008-05" db="EMBL/GenBank/DDBJ databases">
        <title>Complete sequence of Rhodopseudomonas palustris TIE-1.</title>
        <authorList>
            <consortium name="US DOE Joint Genome Institute"/>
            <person name="Lucas S."/>
            <person name="Copeland A."/>
            <person name="Lapidus A."/>
            <person name="Glavina del Rio T."/>
            <person name="Dalin E."/>
            <person name="Tice H."/>
            <person name="Pitluck S."/>
            <person name="Chain P."/>
            <person name="Malfatti S."/>
            <person name="Shin M."/>
            <person name="Vergez L."/>
            <person name="Lang D."/>
            <person name="Schmutz J."/>
            <person name="Larimer F."/>
            <person name="Land M."/>
            <person name="Hauser L."/>
            <person name="Kyrpides N."/>
            <person name="Mikhailova N."/>
            <person name="Emerson D."/>
            <person name="Newman D.K."/>
            <person name="Roden E."/>
            <person name="Richardson P."/>
        </authorList>
    </citation>
    <scope>NUCLEOTIDE SEQUENCE [LARGE SCALE GENOMIC DNA]</scope>
    <source>
        <strain>TIE-1</strain>
    </source>
</reference>
<keyword id="KW-0378">Hydrolase</keyword>
<keyword id="KW-0408">Iron</keyword>
<keyword id="KW-0479">Metal-binding</keyword>
<keyword id="KW-0648">Protein biosynthesis</keyword>
<evidence type="ECO:0000255" key="1">
    <source>
        <dbReference type="HAMAP-Rule" id="MF_00163"/>
    </source>
</evidence>